<keyword id="KW-0963">Cytoplasm</keyword>
<keyword id="KW-0671">Queuosine biosynthesis</keyword>
<keyword id="KW-1185">Reference proteome</keyword>
<keyword id="KW-0949">S-adenosyl-L-methionine</keyword>
<keyword id="KW-0808">Transferase</keyword>
<comment type="function">
    <text evidence="1">Transfers and isomerizes the ribose moiety from AdoMet to the 7-aminomethyl group of 7-deazaguanine (preQ1-tRNA) to give epoxyqueuosine (oQ-tRNA).</text>
</comment>
<comment type="catalytic activity">
    <reaction evidence="1">
        <text>7-aminomethyl-7-carbaguanosine(34) in tRNA + S-adenosyl-L-methionine = epoxyqueuosine(34) in tRNA + adenine + L-methionine + 2 H(+)</text>
        <dbReference type="Rhea" id="RHEA:32155"/>
        <dbReference type="Rhea" id="RHEA-COMP:10342"/>
        <dbReference type="Rhea" id="RHEA-COMP:18582"/>
        <dbReference type="ChEBI" id="CHEBI:15378"/>
        <dbReference type="ChEBI" id="CHEBI:16708"/>
        <dbReference type="ChEBI" id="CHEBI:57844"/>
        <dbReference type="ChEBI" id="CHEBI:59789"/>
        <dbReference type="ChEBI" id="CHEBI:82833"/>
        <dbReference type="ChEBI" id="CHEBI:194443"/>
        <dbReference type="EC" id="2.4.99.17"/>
    </reaction>
</comment>
<comment type="pathway">
    <text evidence="1">tRNA modification; tRNA-queuosine biosynthesis.</text>
</comment>
<comment type="subunit">
    <text evidence="1">Monomer.</text>
</comment>
<comment type="subcellular location">
    <subcellularLocation>
        <location evidence="1">Cytoplasm</location>
    </subcellularLocation>
</comment>
<comment type="similarity">
    <text evidence="1">Belongs to the QueA family.</text>
</comment>
<sequence>MKKLRKRKMSTYLSDYDYFLPEELIGQKPREPRDSAKLMLIDRKNGSVEHKNFYNIIDYLQKGDILVRNATKVIPARIFGHKDTGGVLEILLIKRITLDTWECLLKPAKKLKLGQKLYIGENKELIAELLEIKEDGNRILKFYYEGSFEEILDKLGSMPLPPYITRKLENKDRYQTVYAQRGESVAAPTAGLHFTEELLNKILDKGVEIVDIFLEVGLGTFRPVQTVNVLEHKMHEESFEISEKVAKIINEAKAEGRRIISVGTTATRALESSVDENGKLIAQKKDTGIFIYPGYKFKIVDALITNFHLPKSTLLMLVSAFYDREKMLEIYNLAVKEKYHFFSFGDSMFIY</sequence>
<name>QUEA_FUSNN</name>
<protein>
    <recommendedName>
        <fullName evidence="1">S-adenosylmethionine:tRNA ribosyltransferase-isomerase</fullName>
        <ecNumber evidence="1">2.4.99.17</ecNumber>
    </recommendedName>
    <alternativeName>
        <fullName evidence="1">Queuosine biosynthesis protein QueA</fullName>
    </alternativeName>
</protein>
<gene>
    <name evidence="1" type="primary">queA</name>
    <name type="ordered locus">FN1330</name>
</gene>
<feature type="chain" id="PRO_0000165404" description="S-adenosylmethionine:tRNA ribosyltransferase-isomerase">
    <location>
        <begin position="1"/>
        <end position="351"/>
    </location>
</feature>
<dbReference type="EC" id="2.4.99.17" evidence="1"/>
<dbReference type="EMBL" id="AE009951">
    <property type="protein sequence ID" value="AAL95526.1"/>
    <property type="molecule type" value="Genomic_DNA"/>
</dbReference>
<dbReference type="RefSeq" id="NP_604227.1">
    <property type="nucleotide sequence ID" value="NC_003454.1"/>
</dbReference>
<dbReference type="SMR" id="Q8R620"/>
<dbReference type="FunCoup" id="Q8R620">
    <property type="interactions" value="261"/>
</dbReference>
<dbReference type="STRING" id="190304.FN1330"/>
<dbReference type="PaxDb" id="190304-FN1330"/>
<dbReference type="EnsemblBacteria" id="AAL95526">
    <property type="protein sequence ID" value="AAL95526"/>
    <property type="gene ID" value="FN1330"/>
</dbReference>
<dbReference type="KEGG" id="fnu:FN1330"/>
<dbReference type="PATRIC" id="fig|190304.8.peg.1894"/>
<dbReference type="eggNOG" id="COG0809">
    <property type="taxonomic scope" value="Bacteria"/>
</dbReference>
<dbReference type="HOGENOM" id="CLU_039110_1_0_0"/>
<dbReference type="InParanoid" id="Q8R620"/>
<dbReference type="BioCyc" id="FNUC190304:G1FZS-1905-MONOMER"/>
<dbReference type="UniPathway" id="UPA00392"/>
<dbReference type="Proteomes" id="UP000002521">
    <property type="component" value="Chromosome"/>
</dbReference>
<dbReference type="GO" id="GO:0005737">
    <property type="term" value="C:cytoplasm"/>
    <property type="evidence" value="ECO:0007669"/>
    <property type="project" value="UniProtKB-SubCell"/>
</dbReference>
<dbReference type="GO" id="GO:0051075">
    <property type="term" value="F:S-adenosylmethionine:tRNA ribosyltransferase-isomerase activity"/>
    <property type="evidence" value="ECO:0000318"/>
    <property type="project" value="GO_Central"/>
</dbReference>
<dbReference type="GO" id="GO:0008616">
    <property type="term" value="P:queuosine biosynthetic process"/>
    <property type="evidence" value="ECO:0000318"/>
    <property type="project" value="GO_Central"/>
</dbReference>
<dbReference type="GO" id="GO:0002099">
    <property type="term" value="P:tRNA wobble guanine modification"/>
    <property type="evidence" value="ECO:0000318"/>
    <property type="project" value="GO_Central"/>
</dbReference>
<dbReference type="FunFam" id="2.40.10.240:FF:000002">
    <property type="entry name" value="S-adenosylmethionine:tRNA ribosyltransferase-isomerase"/>
    <property type="match status" value="1"/>
</dbReference>
<dbReference type="FunFam" id="3.40.1780.10:FF:000001">
    <property type="entry name" value="S-adenosylmethionine:tRNA ribosyltransferase-isomerase"/>
    <property type="match status" value="1"/>
</dbReference>
<dbReference type="Gene3D" id="2.40.10.240">
    <property type="entry name" value="QueA-like"/>
    <property type="match status" value="1"/>
</dbReference>
<dbReference type="Gene3D" id="3.40.1780.10">
    <property type="entry name" value="QueA-like"/>
    <property type="match status" value="1"/>
</dbReference>
<dbReference type="HAMAP" id="MF_00113">
    <property type="entry name" value="QueA"/>
    <property type="match status" value="1"/>
</dbReference>
<dbReference type="InterPro" id="IPR003699">
    <property type="entry name" value="QueA"/>
</dbReference>
<dbReference type="InterPro" id="IPR042118">
    <property type="entry name" value="QueA_dom1"/>
</dbReference>
<dbReference type="InterPro" id="IPR042119">
    <property type="entry name" value="QueA_dom2"/>
</dbReference>
<dbReference type="InterPro" id="IPR036100">
    <property type="entry name" value="QueA_sf"/>
</dbReference>
<dbReference type="NCBIfam" id="NF001140">
    <property type="entry name" value="PRK00147.1"/>
    <property type="match status" value="1"/>
</dbReference>
<dbReference type="NCBIfam" id="TIGR00113">
    <property type="entry name" value="queA"/>
    <property type="match status" value="1"/>
</dbReference>
<dbReference type="PANTHER" id="PTHR30307">
    <property type="entry name" value="S-ADENOSYLMETHIONINE:TRNA RIBOSYLTRANSFERASE-ISOMERASE"/>
    <property type="match status" value="1"/>
</dbReference>
<dbReference type="PANTHER" id="PTHR30307:SF0">
    <property type="entry name" value="S-ADENOSYLMETHIONINE:TRNA RIBOSYLTRANSFERASE-ISOMERASE"/>
    <property type="match status" value="1"/>
</dbReference>
<dbReference type="Pfam" id="PF02547">
    <property type="entry name" value="Queuosine_synth"/>
    <property type="match status" value="1"/>
</dbReference>
<dbReference type="SUPFAM" id="SSF111337">
    <property type="entry name" value="QueA-like"/>
    <property type="match status" value="1"/>
</dbReference>
<reference key="1">
    <citation type="journal article" date="2002" name="J. Bacteriol.">
        <title>Genome sequence and analysis of the oral bacterium Fusobacterium nucleatum strain ATCC 25586.</title>
        <authorList>
            <person name="Kapatral V."/>
            <person name="Anderson I."/>
            <person name="Ivanova N."/>
            <person name="Reznik G."/>
            <person name="Los T."/>
            <person name="Lykidis A."/>
            <person name="Bhattacharyya A."/>
            <person name="Bartman A."/>
            <person name="Gardner W."/>
            <person name="Grechkin G."/>
            <person name="Zhu L."/>
            <person name="Vasieva O."/>
            <person name="Chu L."/>
            <person name="Kogan Y."/>
            <person name="Chaga O."/>
            <person name="Goltsman E."/>
            <person name="Bernal A."/>
            <person name="Larsen N."/>
            <person name="D'Souza M."/>
            <person name="Walunas T."/>
            <person name="Pusch G."/>
            <person name="Haselkorn R."/>
            <person name="Fonstein M."/>
            <person name="Kyrpides N.C."/>
            <person name="Overbeek R."/>
        </authorList>
    </citation>
    <scope>NUCLEOTIDE SEQUENCE [LARGE SCALE GENOMIC DNA]</scope>
    <source>
        <strain>ATCC 25586 / DSM 15643 / BCRC 10681 / CIP 101130 / JCM 8532 / KCTC 2640 / LMG 13131 / VPI 4355</strain>
    </source>
</reference>
<accession>Q8R620</accession>
<proteinExistence type="inferred from homology"/>
<evidence type="ECO:0000255" key="1">
    <source>
        <dbReference type="HAMAP-Rule" id="MF_00113"/>
    </source>
</evidence>
<organism>
    <name type="scientific">Fusobacterium nucleatum subsp. nucleatum (strain ATCC 25586 / DSM 15643 / BCRC 10681 / CIP 101130 / JCM 8532 / KCTC 2640 / LMG 13131 / VPI 4355)</name>
    <dbReference type="NCBI Taxonomy" id="190304"/>
    <lineage>
        <taxon>Bacteria</taxon>
        <taxon>Fusobacteriati</taxon>
        <taxon>Fusobacteriota</taxon>
        <taxon>Fusobacteriia</taxon>
        <taxon>Fusobacteriales</taxon>
        <taxon>Fusobacteriaceae</taxon>
        <taxon>Fusobacterium</taxon>
    </lineage>
</organism>